<proteinExistence type="evidence at transcript level"/>
<gene>
    <name type="primary">foxred2</name>
    <name type="ORF">si:dkeyp-69e1.5</name>
    <name type="ORF">zgc:153216</name>
</gene>
<dbReference type="EMBL" id="CR383684">
    <property type="protein sequence ID" value="CAQ14966.1"/>
    <property type="molecule type" value="Genomic_DNA"/>
</dbReference>
<dbReference type="EMBL" id="BC124275">
    <property type="protein sequence ID" value="AAI24276.1"/>
    <property type="molecule type" value="mRNA"/>
</dbReference>
<dbReference type="RefSeq" id="NP_001070128.1">
    <property type="nucleotide sequence ID" value="NM_001076660.1"/>
</dbReference>
<dbReference type="RefSeq" id="XP_005163970.1">
    <property type="nucleotide sequence ID" value="XM_005163913.5"/>
</dbReference>
<dbReference type="RefSeq" id="XP_009297707.1">
    <property type="nucleotide sequence ID" value="XM_009299432.2"/>
</dbReference>
<dbReference type="FunCoup" id="B0UXS1">
    <property type="interactions" value="399"/>
</dbReference>
<dbReference type="STRING" id="7955.ENSDARP00000150274"/>
<dbReference type="GlyCosmos" id="B0UXS1">
    <property type="glycosylation" value="2 sites, No reported glycans"/>
</dbReference>
<dbReference type="PaxDb" id="7955-ENSDARP00000104384"/>
<dbReference type="PeptideAtlas" id="B0UXS1"/>
<dbReference type="Ensembl" id="ENSDART00000135389">
    <property type="protein sequence ID" value="ENSDARP00000119181"/>
    <property type="gene ID" value="ENSDARG00000061354"/>
</dbReference>
<dbReference type="Ensembl" id="ENSDART00000182411">
    <property type="protein sequence ID" value="ENSDARP00000150274"/>
    <property type="gene ID" value="ENSDARG00000061354"/>
</dbReference>
<dbReference type="GeneID" id="767722"/>
<dbReference type="KEGG" id="dre:767722"/>
<dbReference type="AGR" id="ZFIN:ZDB-GENE-060929-1026"/>
<dbReference type="CTD" id="80020"/>
<dbReference type="ZFIN" id="ZDB-GENE-060929-1026">
    <property type="gene designation" value="foxred2"/>
</dbReference>
<dbReference type="eggNOG" id="KOG1399">
    <property type="taxonomic scope" value="Eukaryota"/>
</dbReference>
<dbReference type="HOGENOM" id="CLU_014290_1_0_1"/>
<dbReference type="InParanoid" id="B0UXS1"/>
<dbReference type="OMA" id="KGQAYQC"/>
<dbReference type="OrthoDB" id="66881at2759"/>
<dbReference type="PhylomeDB" id="B0UXS1"/>
<dbReference type="TreeFam" id="TF324712"/>
<dbReference type="PRO" id="PR:B0UXS1"/>
<dbReference type="Proteomes" id="UP000000437">
    <property type="component" value="Chromosome 3"/>
</dbReference>
<dbReference type="Bgee" id="ENSDARG00000061354">
    <property type="expression patterns" value="Expressed in liver and 21 other cell types or tissues"/>
</dbReference>
<dbReference type="GO" id="GO:0005788">
    <property type="term" value="C:endoplasmic reticulum lumen"/>
    <property type="evidence" value="ECO:0000250"/>
    <property type="project" value="UniProtKB"/>
</dbReference>
<dbReference type="GO" id="GO:0050660">
    <property type="term" value="F:flavin adenine dinucleotide binding"/>
    <property type="evidence" value="ECO:0000250"/>
    <property type="project" value="UniProtKB"/>
</dbReference>
<dbReference type="GO" id="GO:0004497">
    <property type="term" value="F:monooxygenase activity"/>
    <property type="evidence" value="ECO:0000318"/>
    <property type="project" value="GO_Central"/>
</dbReference>
<dbReference type="GO" id="GO:0036503">
    <property type="term" value="P:ERAD pathway"/>
    <property type="evidence" value="ECO:0000250"/>
    <property type="project" value="UniProtKB"/>
</dbReference>
<dbReference type="FunFam" id="3.50.50.60:FF:000521">
    <property type="entry name" value="FAD dependent oxidoreductase domain containing 2"/>
    <property type="match status" value="1"/>
</dbReference>
<dbReference type="Gene3D" id="3.50.50.60">
    <property type="entry name" value="FAD/NAD(P)-binding domain"/>
    <property type="match status" value="1"/>
</dbReference>
<dbReference type="InterPro" id="IPR050982">
    <property type="entry name" value="Auxin_biosynth/cation_transpt"/>
</dbReference>
<dbReference type="InterPro" id="IPR036188">
    <property type="entry name" value="FAD/NAD-bd_sf"/>
</dbReference>
<dbReference type="PANTHER" id="PTHR43539:SF23">
    <property type="entry name" value="FAD-DEPENDENT OXIDOREDUCTASE DOMAIN-CONTAINING PROTEIN 2"/>
    <property type="match status" value="1"/>
</dbReference>
<dbReference type="PANTHER" id="PTHR43539">
    <property type="entry name" value="FLAVIN-BINDING MONOOXYGENASE-LIKE PROTEIN (AFU_ORTHOLOGUE AFUA_4G09220)"/>
    <property type="match status" value="1"/>
</dbReference>
<dbReference type="Pfam" id="PF13738">
    <property type="entry name" value="Pyr_redox_3"/>
    <property type="match status" value="1"/>
</dbReference>
<dbReference type="SUPFAM" id="SSF51905">
    <property type="entry name" value="FAD/NAD(P)-binding domain"/>
    <property type="match status" value="1"/>
</dbReference>
<keyword id="KW-0256">Endoplasmic reticulum</keyword>
<keyword id="KW-0274">FAD</keyword>
<keyword id="KW-0285">Flavoprotein</keyword>
<keyword id="KW-0325">Glycoprotein</keyword>
<keyword id="KW-0560">Oxidoreductase</keyword>
<keyword id="KW-1185">Reference proteome</keyword>
<keyword id="KW-0732">Signal</keyword>
<name>FXRD2_DANRE</name>
<feature type="signal peptide" evidence="2">
    <location>
        <begin position="1"/>
        <end position="22"/>
    </location>
</feature>
<feature type="chain" id="PRO_0000337694" description="FAD-dependent oxidoreductase domain-containing protein 2">
    <location>
        <begin position="23"/>
        <end position="687"/>
    </location>
</feature>
<feature type="glycosylation site" description="N-linked (GlcNAc...) asparagine" evidence="2">
    <location>
        <position position="29"/>
    </location>
</feature>
<feature type="glycosylation site" description="N-linked (GlcNAc...) asparagine" evidence="2">
    <location>
        <position position="305"/>
    </location>
</feature>
<feature type="sequence conflict" description="In Ref. 2; AAI24276." evidence="3" ref="2">
    <original>DLL</original>
    <variation>VLF</variation>
    <location>
        <begin position="15"/>
        <end position="17"/>
    </location>
</feature>
<feature type="sequence conflict" description="In Ref. 2; AAI24276." evidence="3" ref="2">
    <original>D</original>
    <variation>N</variation>
    <location>
        <position position="108"/>
    </location>
</feature>
<feature type="sequence conflict" description="In Ref. 2; AAI24276." evidence="3" ref="2">
    <original>RK</original>
    <variation>QE</variation>
    <location>
        <begin position="119"/>
        <end position="120"/>
    </location>
</feature>
<feature type="sequence conflict" description="In Ref. 2; AAI24276." evidence="3" ref="2">
    <original>R</original>
    <variation>K</variation>
    <location>
        <position position="151"/>
    </location>
</feature>
<feature type="sequence conflict" description="In Ref. 2; AAI24276." evidence="3" ref="2">
    <original>L</original>
    <variation>R</variation>
    <location>
        <position position="323"/>
    </location>
</feature>
<feature type="sequence conflict" description="In Ref. 2; AAI24276." evidence="3" ref="2">
    <original>I</original>
    <variation>T</variation>
    <location>
        <position position="405"/>
    </location>
</feature>
<feature type="sequence conflict" description="In Ref. 2; AAI24276." evidence="3" ref="2">
    <original>I</original>
    <variation>L</variation>
    <location>
        <position position="448"/>
    </location>
</feature>
<feature type="sequence conflict" description="In Ref. 2; AAI24276." evidence="3" ref="2">
    <original>A</original>
    <variation>T</variation>
    <location>
        <position position="666"/>
    </location>
</feature>
<organism>
    <name type="scientific">Danio rerio</name>
    <name type="common">Zebrafish</name>
    <name type="synonym">Brachydanio rerio</name>
    <dbReference type="NCBI Taxonomy" id="7955"/>
    <lineage>
        <taxon>Eukaryota</taxon>
        <taxon>Metazoa</taxon>
        <taxon>Chordata</taxon>
        <taxon>Craniata</taxon>
        <taxon>Vertebrata</taxon>
        <taxon>Euteleostomi</taxon>
        <taxon>Actinopterygii</taxon>
        <taxon>Neopterygii</taxon>
        <taxon>Teleostei</taxon>
        <taxon>Ostariophysi</taxon>
        <taxon>Cypriniformes</taxon>
        <taxon>Danionidae</taxon>
        <taxon>Danioninae</taxon>
        <taxon>Danio</taxon>
    </lineage>
</organism>
<reference key="1">
    <citation type="journal article" date="2013" name="Nature">
        <title>The zebrafish reference genome sequence and its relationship to the human genome.</title>
        <authorList>
            <person name="Howe K."/>
            <person name="Clark M.D."/>
            <person name="Torroja C.F."/>
            <person name="Torrance J."/>
            <person name="Berthelot C."/>
            <person name="Muffato M."/>
            <person name="Collins J.E."/>
            <person name="Humphray S."/>
            <person name="McLaren K."/>
            <person name="Matthews L."/>
            <person name="McLaren S."/>
            <person name="Sealy I."/>
            <person name="Caccamo M."/>
            <person name="Churcher C."/>
            <person name="Scott C."/>
            <person name="Barrett J.C."/>
            <person name="Koch R."/>
            <person name="Rauch G.J."/>
            <person name="White S."/>
            <person name="Chow W."/>
            <person name="Kilian B."/>
            <person name="Quintais L.T."/>
            <person name="Guerra-Assuncao J.A."/>
            <person name="Zhou Y."/>
            <person name="Gu Y."/>
            <person name="Yen J."/>
            <person name="Vogel J.H."/>
            <person name="Eyre T."/>
            <person name="Redmond S."/>
            <person name="Banerjee R."/>
            <person name="Chi J."/>
            <person name="Fu B."/>
            <person name="Langley E."/>
            <person name="Maguire S.F."/>
            <person name="Laird G.K."/>
            <person name="Lloyd D."/>
            <person name="Kenyon E."/>
            <person name="Donaldson S."/>
            <person name="Sehra H."/>
            <person name="Almeida-King J."/>
            <person name="Loveland J."/>
            <person name="Trevanion S."/>
            <person name="Jones M."/>
            <person name="Quail M."/>
            <person name="Willey D."/>
            <person name="Hunt A."/>
            <person name="Burton J."/>
            <person name="Sims S."/>
            <person name="McLay K."/>
            <person name="Plumb B."/>
            <person name="Davis J."/>
            <person name="Clee C."/>
            <person name="Oliver K."/>
            <person name="Clark R."/>
            <person name="Riddle C."/>
            <person name="Elliot D."/>
            <person name="Threadgold G."/>
            <person name="Harden G."/>
            <person name="Ware D."/>
            <person name="Begum S."/>
            <person name="Mortimore B."/>
            <person name="Kerry G."/>
            <person name="Heath P."/>
            <person name="Phillimore B."/>
            <person name="Tracey A."/>
            <person name="Corby N."/>
            <person name="Dunn M."/>
            <person name="Johnson C."/>
            <person name="Wood J."/>
            <person name="Clark S."/>
            <person name="Pelan S."/>
            <person name="Griffiths G."/>
            <person name="Smith M."/>
            <person name="Glithero R."/>
            <person name="Howden P."/>
            <person name="Barker N."/>
            <person name="Lloyd C."/>
            <person name="Stevens C."/>
            <person name="Harley J."/>
            <person name="Holt K."/>
            <person name="Panagiotidis G."/>
            <person name="Lovell J."/>
            <person name="Beasley H."/>
            <person name="Henderson C."/>
            <person name="Gordon D."/>
            <person name="Auger K."/>
            <person name="Wright D."/>
            <person name="Collins J."/>
            <person name="Raisen C."/>
            <person name="Dyer L."/>
            <person name="Leung K."/>
            <person name="Robertson L."/>
            <person name="Ambridge K."/>
            <person name="Leongamornlert D."/>
            <person name="McGuire S."/>
            <person name="Gilderthorp R."/>
            <person name="Griffiths C."/>
            <person name="Manthravadi D."/>
            <person name="Nichol S."/>
            <person name="Barker G."/>
            <person name="Whitehead S."/>
            <person name="Kay M."/>
            <person name="Brown J."/>
            <person name="Murnane C."/>
            <person name="Gray E."/>
            <person name="Humphries M."/>
            <person name="Sycamore N."/>
            <person name="Barker D."/>
            <person name="Saunders D."/>
            <person name="Wallis J."/>
            <person name="Babbage A."/>
            <person name="Hammond S."/>
            <person name="Mashreghi-Mohammadi M."/>
            <person name="Barr L."/>
            <person name="Martin S."/>
            <person name="Wray P."/>
            <person name="Ellington A."/>
            <person name="Matthews N."/>
            <person name="Ellwood M."/>
            <person name="Woodmansey R."/>
            <person name="Clark G."/>
            <person name="Cooper J."/>
            <person name="Tromans A."/>
            <person name="Grafham D."/>
            <person name="Skuce C."/>
            <person name="Pandian R."/>
            <person name="Andrews R."/>
            <person name="Harrison E."/>
            <person name="Kimberley A."/>
            <person name="Garnett J."/>
            <person name="Fosker N."/>
            <person name="Hall R."/>
            <person name="Garner P."/>
            <person name="Kelly D."/>
            <person name="Bird C."/>
            <person name="Palmer S."/>
            <person name="Gehring I."/>
            <person name="Berger A."/>
            <person name="Dooley C.M."/>
            <person name="Ersan-Urun Z."/>
            <person name="Eser C."/>
            <person name="Geiger H."/>
            <person name="Geisler M."/>
            <person name="Karotki L."/>
            <person name="Kirn A."/>
            <person name="Konantz J."/>
            <person name="Konantz M."/>
            <person name="Oberlander M."/>
            <person name="Rudolph-Geiger S."/>
            <person name="Teucke M."/>
            <person name="Lanz C."/>
            <person name="Raddatz G."/>
            <person name="Osoegawa K."/>
            <person name="Zhu B."/>
            <person name="Rapp A."/>
            <person name="Widaa S."/>
            <person name="Langford C."/>
            <person name="Yang F."/>
            <person name="Schuster S.C."/>
            <person name="Carter N.P."/>
            <person name="Harrow J."/>
            <person name="Ning Z."/>
            <person name="Herrero J."/>
            <person name="Searle S.M."/>
            <person name="Enright A."/>
            <person name="Geisler R."/>
            <person name="Plasterk R.H."/>
            <person name="Lee C."/>
            <person name="Westerfield M."/>
            <person name="de Jong P.J."/>
            <person name="Zon L.I."/>
            <person name="Postlethwait J.H."/>
            <person name="Nusslein-Volhard C."/>
            <person name="Hubbard T.J."/>
            <person name="Roest Crollius H."/>
            <person name="Rogers J."/>
            <person name="Stemple D.L."/>
        </authorList>
    </citation>
    <scope>NUCLEOTIDE SEQUENCE [LARGE SCALE GENOMIC DNA]</scope>
    <source>
        <strain>Tuebingen</strain>
    </source>
</reference>
<reference key="2">
    <citation type="submission" date="2006-09" db="EMBL/GenBank/DDBJ databases">
        <authorList>
            <consortium name="NIH - Zebrafish Gene Collection (ZGC) project"/>
        </authorList>
    </citation>
    <scope>NUCLEOTIDE SEQUENCE [LARGE SCALE MRNA]</scope>
    <source>
        <tissue>Embryo</tissue>
    </source>
</reference>
<comment type="function">
    <text evidence="1">Probable flavoprotein which may function in endoplasmic reticulum associated degradation (ERAD). May bind non-native proteins in the endoplasmic reticulum and target them to the ubiquitination machinery for subsequent degradation (By similarity).</text>
</comment>
<comment type="cofactor">
    <cofactor evidence="1">
        <name>FAD</name>
        <dbReference type="ChEBI" id="CHEBI:57692"/>
    </cofactor>
</comment>
<comment type="subcellular location">
    <subcellularLocation>
        <location evidence="1">Endoplasmic reticulum lumen</location>
    </subcellularLocation>
</comment>
<comment type="PTM">
    <text evidence="1">N-glycosylated.</text>
</comment>
<comment type="similarity">
    <text evidence="3">Belongs to the FOXRED2 family.</text>
</comment>
<sequence>MSVIQLVFRLLCVLDLLLAVSASGLHGRNRTLSHEYCVLGAGPAGLQMGYFLSRSQRDYIILERNAGPGSFFNIYPRHRKLISINKIYTGRRNKEFNLRHDWNSLLSDRPDLLFQRISRKLYPSADDFPHYLSLFEKELGLKVKYGTDVGRIKASDFNGHQGYVLTDQNGVNYQCRVLLVSTGLWVPQEVDFRGSDLVEGYESIPTDPEEFKDQAVLILGKGNSAFETAQSILGRASRIHLYSPSPVRLAWQTHYVGDLRAVNNELLDTYQLKSLDGLVEGRLEDIAIVRRAKDRGKRRAAKKRNSTSTKRNEPLYLTLTELLDDQNDTNISNVTGQNLPGYHTDNFSLRQPYDRVIRCLGFRFNFSIFDGSARPPQSSGARGRLPGVTAWYEGRGTPNMFVLGIAAHSRDYRMSAGGFIHGFRYTVRAVHKILEQRYHNIAWPTTNIPISQLQSWILRRVNEASGTYQMFGVLGDIILLQGSHCEYLEEFPLQALPQLSALSGRSISDHGLLVLVMQYGLNHTDTLGPGRAESEWTKAWKSNFLHPVLYYYKTLPTDKDMRQRPVGWPLPRPEAVHHMVEDFLTEWDQPISHSQPLRRFLEHCLKTDLRAFYAESCFLLSLTSRNPPLFCRQGYLRKQGIMGNRHLWQHAREAGLMEDAALSEDASVPEYLNHAGAAVISTVNFDL</sequence>
<evidence type="ECO:0000250" key="1"/>
<evidence type="ECO:0000255" key="2"/>
<evidence type="ECO:0000305" key="3"/>
<accession>B0UXS1</accession>
<accession>Q08CE3</accession>
<protein>
    <recommendedName>
        <fullName>FAD-dependent oxidoreductase domain-containing protein 2</fullName>
    </recommendedName>
</protein>